<reference key="1">
    <citation type="journal article" date="2005" name="J. Bacteriol.">
        <title>Insights on evolution of virulence and resistance from the complete genome analysis of an early methicillin-resistant Staphylococcus aureus strain and a biofilm-producing methicillin-resistant Staphylococcus epidermidis strain.</title>
        <authorList>
            <person name="Gill S.R."/>
            <person name="Fouts D.E."/>
            <person name="Archer G.L."/>
            <person name="Mongodin E.F."/>
            <person name="DeBoy R.T."/>
            <person name="Ravel J."/>
            <person name="Paulsen I.T."/>
            <person name="Kolonay J.F."/>
            <person name="Brinkac L.M."/>
            <person name="Beanan M.J."/>
            <person name="Dodson R.J."/>
            <person name="Daugherty S.C."/>
            <person name="Madupu R."/>
            <person name="Angiuoli S.V."/>
            <person name="Durkin A.S."/>
            <person name="Haft D.H."/>
            <person name="Vamathevan J.J."/>
            <person name="Khouri H."/>
            <person name="Utterback T.R."/>
            <person name="Lee C."/>
            <person name="Dimitrov G."/>
            <person name="Jiang L."/>
            <person name="Qin H."/>
            <person name="Weidman J."/>
            <person name="Tran K."/>
            <person name="Kang K.H."/>
            <person name="Hance I.R."/>
            <person name="Nelson K.E."/>
            <person name="Fraser C.M."/>
        </authorList>
    </citation>
    <scope>NUCLEOTIDE SEQUENCE [LARGE SCALE GENOMIC DNA]</scope>
    <source>
        <strain>COL</strain>
    </source>
</reference>
<keyword id="KW-0408">Iron</keyword>
<keyword id="KW-0411">Iron-sulfur</keyword>
<keyword id="KW-0456">Lyase</keyword>
<keyword id="KW-0479">Metal-binding</keyword>
<keyword id="KW-0694">RNA-binding</keyword>
<keyword id="KW-0816">Tricarboxylic acid cycle</keyword>
<proteinExistence type="inferred from homology"/>
<sequence>MAANFKEQSKKHFDLNGQSYTYYDLKAVEEQGITKVSNLPYSIRVLLESLLRQEDDFVITDDHIKALSQFGKDGNEGEVPFKPSRVILQDFTGVPAVVDLASLRKAMDDVGGDITKINPEVPVDLVIDHSVQVDSYANPEALERNMKLEFERNYERYQFLNWATKAFDNYNAVPPATGIVHQVNLEYLASVVHVRDVDGEKTAFPDTLVGTDSHTTMINGIGVLGWGVGGIEAEAGMLGQPSYFPIPEVIGVRLVNSLPQGATATDLALRVTQELRKKGVVGKFVEFFGPGVQHLPLADRATIANMAPEYGATCGFFPVDDESLKYMKLTGRSDEHIALVKEYLKQNHMFFDVEKEDPNYTDVIELDLSTVEASLSGPKRPQDLIFLSDMKSSFENSVTAPAGNQGHGLDKSEFDKKAEINFKDGSKATMKTGDIAIAAITSCTNTSNPYVMLGAGLVAKKAVEKGLKVPEYVKTSLAPGSKVVTGYLRDAGLQPYLDDLGFNLVGYGCTTCIGNSGPLLPEIEKAIADEDLLVTSVLSGNRNFEGRIHPLVKANYLASPQLVVAYALAGTVDIDLQNEPIGKGNDGEDVYLKDIWPSIKEVSDTVDSVVTPELFIEEYNNVYNNNELWNEIDVTDQPLYDFDPNSTYIQNPSFFQGLSKEPGTIVPLNGLRVMGKFGDSVTTDHISPAGAIGKDTPAGKYLQDHQVPIREFNSYGSRRGNHEVMVRGTFANIRIKNQLAPGTEGGFTTYWPTNEVMPIFDAAMKYKEDGTGLVVLAGNDYGMGSSRDWAAKGTNLLGVKTVIAQSYERIHRSNLVMMGVLPLEFKKGESADSLGLDGTEEISVNIDENVQPHDYVKVTAKKQDGDLVEFDAMVRFDSLVEMDYYRHGGILQMVLRNKLAQ</sequence>
<organism>
    <name type="scientific">Staphylococcus aureus (strain COL)</name>
    <dbReference type="NCBI Taxonomy" id="93062"/>
    <lineage>
        <taxon>Bacteria</taxon>
        <taxon>Bacillati</taxon>
        <taxon>Bacillota</taxon>
        <taxon>Bacilli</taxon>
        <taxon>Bacillales</taxon>
        <taxon>Staphylococcaceae</taxon>
        <taxon>Staphylococcus</taxon>
    </lineage>
</organism>
<comment type="function">
    <text evidence="1 3">Involved in the catabolism of short chain fatty acids (SCFA) via the tricarboxylic acid (TCA)(acetyl degradation route) and probably the 2-methylcitrate cycle I (propionate degradation route). Catalyzes the reversible isomerization of citrate to isocitrate via cis-aconitate. Could catalyze the hydration of 2-methyl-cis-aconitate to yield (2R,3S)-2-methylisocitrate. The apo form of AcnA functions as a RNA-binding regulatory protein.</text>
</comment>
<comment type="catalytic activity">
    <reaction evidence="3">
        <text>citrate = D-threo-isocitrate</text>
        <dbReference type="Rhea" id="RHEA:10336"/>
        <dbReference type="ChEBI" id="CHEBI:15562"/>
        <dbReference type="ChEBI" id="CHEBI:16947"/>
        <dbReference type="EC" id="4.2.1.3"/>
    </reaction>
</comment>
<comment type="catalytic activity">
    <reaction evidence="3">
        <text>(2S,3R)-3-hydroxybutane-1,2,3-tricarboxylate = 2-methyl-cis-aconitate + H2O</text>
        <dbReference type="Rhea" id="RHEA:17941"/>
        <dbReference type="ChEBI" id="CHEBI:15377"/>
        <dbReference type="ChEBI" id="CHEBI:57429"/>
        <dbReference type="ChEBI" id="CHEBI:57872"/>
        <dbReference type="EC" id="4.2.1.99"/>
    </reaction>
</comment>
<comment type="cofactor">
    <cofactor evidence="1">
        <name>[4Fe-4S] cluster</name>
        <dbReference type="ChEBI" id="CHEBI:49883"/>
    </cofactor>
    <text evidence="1">Binds 1 [4Fe-4S] cluster per subunit.</text>
</comment>
<comment type="pathway">
    <text evidence="3">Carbohydrate metabolism; tricarboxylic acid cycle; isocitrate from oxaloacetate: step 2/2.</text>
</comment>
<comment type="pathway">
    <text evidence="3">Organic acid metabolism; propanoate degradation.</text>
</comment>
<comment type="subunit">
    <text evidence="1">Monomer.</text>
</comment>
<comment type="similarity">
    <text evidence="4">Belongs to the aconitase/IPM isomerase family.</text>
</comment>
<name>ACNA_STAAC</name>
<protein>
    <recommendedName>
        <fullName evidence="3">Aconitate hydratase A</fullName>
        <shortName evidence="3">ACN</shortName>
        <shortName evidence="3">Aconitase</shortName>
        <ecNumber evidence="3">4.2.1.3</ecNumber>
    </recommendedName>
    <alternativeName>
        <fullName evidence="3">(2R,3S)-2-methylisocitrate dehydratase</fullName>
    </alternativeName>
    <alternativeName>
        <fullName evidence="3">(2S,3R)-3-hydroxybutane-1,2,3-tricarboxylate dehydratase</fullName>
    </alternativeName>
    <alternativeName>
        <fullName evidence="1">Iron-responsive protein-like</fullName>
        <shortName evidence="1">IRP-like</shortName>
    </alternativeName>
    <alternativeName>
        <fullName evidence="3">Probable 2-methyl-cis-aconitate hydratase</fullName>
        <ecNumber evidence="3">4.2.1.99</ecNumber>
    </alternativeName>
    <alternativeName>
        <fullName evidence="1">RNA-binding protein</fullName>
    </alternativeName>
</protein>
<accession>Q5HG69</accession>
<evidence type="ECO:0000250" key="1">
    <source>
        <dbReference type="UniProtKB" id="P09339"/>
    </source>
</evidence>
<evidence type="ECO:0000250" key="2">
    <source>
        <dbReference type="UniProtKB" id="P36683"/>
    </source>
</evidence>
<evidence type="ECO:0000250" key="3">
    <source>
        <dbReference type="UniProtKB" id="Q8ZP52"/>
    </source>
</evidence>
<evidence type="ECO:0000305" key="4"/>
<dbReference type="EC" id="4.2.1.3" evidence="3"/>
<dbReference type="EC" id="4.2.1.99" evidence="3"/>
<dbReference type="EMBL" id="CP000046">
    <property type="protein sequence ID" value="AAW36634.1"/>
    <property type="molecule type" value="Genomic_DNA"/>
</dbReference>
<dbReference type="RefSeq" id="WP_000729744.1">
    <property type="nucleotide sequence ID" value="NZ_JBGOFO010000003.1"/>
</dbReference>
<dbReference type="SMR" id="Q5HG69"/>
<dbReference type="KEGG" id="sac:SACOL1385"/>
<dbReference type="HOGENOM" id="CLU_013476_2_1_9"/>
<dbReference type="UniPathway" id="UPA00223">
    <property type="reaction ID" value="UER00718"/>
</dbReference>
<dbReference type="UniPathway" id="UPA00946"/>
<dbReference type="Proteomes" id="UP000000530">
    <property type="component" value="Chromosome"/>
</dbReference>
<dbReference type="GO" id="GO:0047456">
    <property type="term" value="F:2-methylisocitrate dehydratase activity"/>
    <property type="evidence" value="ECO:0000250"/>
    <property type="project" value="UniProtKB"/>
</dbReference>
<dbReference type="GO" id="GO:0051539">
    <property type="term" value="F:4 iron, 4 sulfur cluster binding"/>
    <property type="evidence" value="ECO:0000250"/>
    <property type="project" value="UniProtKB"/>
</dbReference>
<dbReference type="GO" id="GO:0003994">
    <property type="term" value="F:aconitate hydratase activity"/>
    <property type="evidence" value="ECO:0000250"/>
    <property type="project" value="UniProtKB"/>
</dbReference>
<dbReference type="GO" id="GO:0046872">
    <property type="term" value="F:metal ion binding"/>
    <property type="evidence" value="ECO:0007669"/>
    <property type="project" value="UniProtKB-KW"/>
</dbReference>
<dbReference type="GO" id="GO:0003730">
    <property type="term" value="F:mRNA 3'-UTR binding"/>
    <property type="evidence" value="ECO:0000250"/>
    <property type="project" value="UniProtKB"/>
</dbReference>
<dbReference type="GO" id="GO:0003729">
    <property type="term" value="F:mRNA binding"/>
    <property type="evidence" value="ECO:0000250"/>
    <property type="project" value="UniProtKB"/>
</dbReference>
<dbReference type="GO" id="GO:0019679">
    <property type="term" value="P:propionate metabolic process, methylcitrate cycle"/>
    <property type="evidence" value="ECO:0000250"/>
    <property type="project" value="UniProtKB"/>
</dbReference>
<dbReference type="GO" id="GO:0006099">
    <property type="term" value="P:tricarboxylic acid cycle"/>
    <property type="evidence" value="ECO:0000250"/>
    <property type="project" value="UniProtKB"/>
</dbReference>
<dbReference type="CDD" id="cd01586">
    <property type="entry name" value="AcnA_IRP"/>
    <property type="match status" value="1"/>
</dbReference>
<dbReference type="CDD" id="cd01580">
    <property type="entry name" value="AcnA_IRP_Swivel"/>
    <property type="match status" value="1"/>
</dbReference>
<dbReference type="FunFam" id="3.20.19.10:FF:000001">
    <property type="entry name" value="Aconitate hydratase"/>
    <property type="match status" value="1"/>
</dbReference>
<dbReference type="FunFam" id="3.30.499.10:FF:000002">
    <property type="entry name" value="Aconitate hydratase"/>
    <property type="match status" value="1"/>
</dbReference>
<dbReference type="FunFam" id="3.30.499.10:FF:000005">
    <property type="entry name" value="cytoplasmic aconitate hydratase"/>
    <property type="match status" value="1"/>
</dbReference>
<dbReference type="Gene3D" id="6.10.190.10">
    <property type="match status" value="1"/>
</dbReference>
<dbReference type="Gene3D" id="3.30.499.10">
    <property type="entry name" value="Aconitase, domain 3"/>
    <property type="match status" value="2"/>
</dbReference>
<dbReference type="Gene3D" id="3.20.19.10">
    <property type="entry name" value="Aconitase, domain 4"/>
    <property type="match status" value="1"/>
</dbReference>
<dbReference type="InterPro" id="IPR044137">
    <property type="entry name" value="AcnA_IRP_Swivel"/>
</dbReference>
<dbReference type="InterPro" id="IPR015931">
    <property type="entry name" value="Acnase/IPM_dHydase_lsu_aba_1/3"/>
</dbReference>
<dbReference type="InterPro" id="IPR001030">
    <property type="entry name" value="Acoase/IPM_deHydtase_lsu_aba"/>
</dbReference>
<dbReference type="InterPro" id="IPR015928">
    <property type="entry name" value="Aconitase/3IPM_dehydase_swvl"/>
</dbReference>
<dbReference type="InterPro" id="IPR006249">
    <property type="entry name" value="Aconitase/IRP2"/>
</dbReference>
<dbReference type="InterPro" id="IPR018136">
    <property type="entry name" value="Aconitase_4Fe-4S_BS"/>
</dbReference>
<dbReference type="InterPro" id="IPR036008">
    <property type="entry name" value="Aconitase_4Fe-4S_dom"/>
</dbReference>
<dbReference type="InterPro" id="IPR000573">
    <property type="entry name" value="AconitaseA/IPMdHydase_ssu_swvl"/>
</dbReference>
<dbReference type="NCBIfam" id="TIGR01341">
    <property type="entry name" value="aconitase_1"/>
    <property type="match status" value="1"/>
</dbReference>
<dbReference type="NCBIfam" id="NF006757">
    <property type="entry name" value="PRK09277.1"/>
    <property type="match status" value="1"/>
</dbReference>
<dbReference type="NCBIfam" id="NF009520">
    <property type="entry name" value="PRK12881.1"/>
    <property type="match status" value="1"/>
</dbReference>
<dbReference type="PANTHER" id="PTHR11670">
    <property type="entry name" value="ACONITASE/IRON-RESPONSIVE ELEMENT FAMILY MEMBER"/>
    <property type="match status" value="1"/>
</dbReference>
<dbReference type="Pfam" id="PF00330">
    <property type="entry name" value="Aconitase"/>
    <property type="match status" value="1"/>
</dbReference>
<dbReference type="Pfam" id="PF00694">
    <property type="entry name" value="Aconitase_C"/>
    <property type="match status" value="1"/>
</dbReference>
<dbReference type="PRINTS" id="PR00415">
    <property type="entry name" value="ACONITASE"/>
</dbReference>
<dbReference type="SUPFAM" id="SSF53732">
    <property type="entry name" value="Aconitase iron-sulfur domain"/>
    <property type="match status" value="1"/>
</dbReference>
<dbReference type="SUPFAM" id="SSF52016">
    <property type="entry name" value="LeuD/IlvD-like"/>
    <property type="match status" value="1"/>
</dbReference>
<dbReference type="PROSITE" id="PS00450">
    <property type="entry name" value="ACONITASE_1"/>
    <property type="match status" value="1"/>
</dbReference>
<dbReference type="PROSITE" id="PS01244">
    <property type="entry name" value="ACONITASE_2"/>
    <property type="match status" value="1"/>
</dbReference>
<feature type="chain" id="PRO_0000076666" description="Aconitate hydratase A">
    <location>
        <begin position="1"/>
        <end position="901"/>
    </location>
</feature>
<feature type="binding site" evidence="2">
    <location>
        <position position="443"/>
    </location>
    <ligand>
        <name>[4Fe-4S] cluster</name>
        <dbReference type="ChEBI" id="CHEBI:49883"/>
    </ligand>
</feature>
<feature type="binding site" evidence="2">
    <location>
        <position position="509"/>
    </location>
    <ligand>
        <name>[4Fe-4S] cluster</name>
        <dbReference type="ChEBI" id="CHEBI:49883"/>
    </ligand>
</feature>
<feature type="binding site" evidence="2">
    <location>
        <position position="512"/>
    </location>
    <ligand>
        <name>[4Fe-4S] cluster</name>
        <dbReference type="ChEBI" id="CHEBI:49883"/>
    </ligand>
</feature>
<gene>
    <name type="primary">acnA</name>
    <name type="synonym">citB</name>
    <name type="ordered locus">SACOL1385</name>
</gene>